<comment type="function">
    <text evidence="1">One of the primary rRNA binding proteins, it binds directly near the 3'-end of the 23S rRNA, where it nucleates assembly of the 50S subunit.</text>
</comment>
<comment type="subunit">
    <text evidence="1">Part of the 50S ribosomal subunit. Forms a cluster with proteins L14 and L19.</text>
</comment>
<comment type="PTM">
    <text evidence="1">Methylated by PrmB.</text>
</comment>
<comment type="similarity">
    <text evidence="1">Belongs to the universal ribosomal protein uL3 family.</text>
</comment>
<protein>
    <recommendedName>
        <fullName evidence="1">Large ribosomal subunit protein uL3</fullName>
    </recommendedName>
    <alternativeName>
        <fullName evidence="2">50S ribosomal protein L3</fullName>
    </alternativeName>
</protein>
<evidence type="ECO:0000255" key="1">
    <source>
        <dbReference type="HAMAP-Rule" id="MF_01325"/>
    </source>
</evidence>
<evidence type="ECO:0000305" key="2"/>
<proteinExistence type="inferred from homology"/>
<sequence length="209" mass="22248">MIGLVGKKVGMTRIFTEDGVSIPVTVIEVEANRVTQVKDLANDGYRAVQVTTGAKKANRVTKPEAGHFAKAGVEAGRGLWEFRLAEGEEYTVGQSISVELFADVKKVDVTGTSKGKGFAGTVKRWNFRTQDATHGNSLSHRVPGSIGQNQTPGKVFKGKKMAGQMGNERVTVQSLDVVRVDAERNLLLVKGGVPGATGCDLIVKPAVKA</sequence>
<accession>B5F8F2</accession>
<keyword id="KW-0488">Methylation</keyword>
<keyword id="KW-0687">Ribonucleoprotein</keyword>
<keyword id="KW-0689">Ribosomal protein</keyword>
<keyword id="KW-0694">RNA-binding</keyword>
<keyword id="KW-0699">rRNA-binding</keyword>
<organism>
    <name type="scientific">Salmonella agona (strain SL483)</name>
    <dbReference type="NCBI Taxonomy" id="454166"/>
    <lineage>
        <taxon>Bacteria</taxon>
        <taxon>Pseudomonadati</taxon>
        <taxon>Pseudomonadota</taxon>
        <taxon>Gammaproteobacteria</taxon>
        <taxon>Enterobacterales</taxon>
        <taxon>Enterobacteriaceae</taxon>
        <taxon>Salmonella</taxon>
    </lineage>
</organism>
<dbReference type="EMBL" id="CP001138">
    <property type="protein sequence ID" value="ACH49467.1"/>
    <property type="molecule type" value="Genomic_DNA"/>
</dbReference>
<dbReference type="RefSeq" id="WP_000579838.1">
    <property type="nucleotide sequence ID" value="NC_011149.1"/>
</dbReference>
<dbReference type="SMR" id="B5F8F2"/>
<dbReference type="KEGG" id="sea:SeAg_B3636"/>
<dbReference type="HOGENOM" id="CLU_044142_4_1_6"/>
<dbReference type="Proteomes" id="UP000008819">
    <property type="component" value="Chromosome"/>
</dbReference>
<dbReference type="GO" id="GO:0022625">
    <property type="term" value="C:cytosolic large ribosomal subunit"/>
    <property type="evidence" value="ECO:0007669"/>
    <property type="project" value="TreeGrafter"/>
</dbReference>
<dbReference type="GO" id="GO:0019843">
    <property type="term" value="F:rRNA binding"/>
    <property type="evidence" value="ECO:0007669"/>
    <property type="project" value="UniProtKB-UniRule"/>
</dbReference>
<dbReference type="GO" id="GO:0003735">
    <property type="term" value="F:structural constituent of ribosome"/>
    <property type="evidence" value="ECO:0007669"/>
    <property type="project" value="InterPro"/>
</dbReference>
<dbReference type="GO" id="GO:0006412">
    <property type="term" value="P:translation"/>
    <property type="evidence" value="ECO:0007669"/>
    <property type="project" value="UniProtKB-UniRule"/>
</dbReference>
<dbReference type="FunFam" id="2.40.30.10:FF:000004">
    <property type="entry name" value="50S ribosomal protein L3"/>
    <property type="match status" value="1"/>
</dbReference>
<dbReference type="FunFam" id="3.30.160.810:FF:000001">
    <property type="entry name" value="50S ribosomal protein L3"/>
    <property type="match status" value="1"/>
</dbReference>
<dbReference type="Gene3D" id="3.30.160.810">
    <property type="match status" value="1"/>
</dbReference>
<dbReference type="Gene3D" id="2.40.30.10">
    <property type="entry name" value="Translation factors"/>
    <property type="match status" value="1"/>
</dbReference>
<dbReference type="HAMAP" id="MF_01325_B">
    <property type="entry name" value="Ribosomal_uL3_B"/>
    <property type="match status" value="1"/>
</dbReference>
<dbReference type="InterPro" id="IPR000597">
    <property type="entry name" value="Ribosomal_uL3"/>
</dbReference>
<dbReference type="InterPro" id="IPR019927">
    <property type="entry name" value="Ribosomal_uL3_bac/org-type"/>
</dbReference>
<dbReference type="InterPro" id="IPR019926">
    <property type="entry name" value="Ribosomal_uL3_CS"/>
</dbReference>
<dbReference type="InterPro" id="IPR009000">
    <property type="entry name" value="Transl_B-barrel_sf"/>
</dbReference>
<dbReference type="NCBIfam" id="TIGR03625">
    <property type="entry name" value="L3_bact"/>
    <property type="match status" value="1"/>
</dbReference>
<dbReference type="PANTHER" id="PTHR11229">
    <property type="entry name" value="50S RIBOSOMAL PROTEIN L3"/>
    <property type="match status" value="1"/>
</dbReference>
<dbReference type="PANTHER" id="PTHR11229:SF16">
    <property type="entry name" value="LARGE RIBOSOMAL SUBUNIT PROTEIN UL3C"/>
    <property type="match status" value="1"/>
</dbReference>
<dbReference type="Pfam" id="PF00297">
    <property type="entry name" value="Ribosomal_L3"/>
    <property type="match status" value="1"/>
</dbReference>
<dbReference type="SUPFAM" id="SSF50447">
    <property type="entry name" value="Translation proteins"/>
    <property type="match status" value="1"/>
</dbReference>
<dbReference type="PROSITE" id="PS00474">
    <property type="entry name" value="RIBOSOMAL_L3"/>
    <property type="match status" value="1"/>
</dbReference>
<name>RL3_SALA4</name>
<gene>
    <name evidence="1" type="primary">rplC</name>
    <name type="ordered locus">SeAg_B3636</name>
</gene>
<feature type="chain" id="PRO_1000141912" description="Large ribosomal subunit protein uL3">
    <location>
        <begin position="1"/>
        <end position="209"/>
    </location>
</feature>
<feature type="modified residue" description="N5-methylglutamine" evidence="1">
    <location>
        <position position="150"/>
    </location>
</feature>
<reference key="1">
    <citation type="journal article" date="2011" name="J. Bacteriol.">
        <title>Comparative genomics of 28 Salmonella enterica isolates: evidence for CRISPR-mediated adaptive sublineage evolution.</title>
        <authorList>
            <person name="Fricke W.F."/>
            <person name="Mammel M.K."/>
            <person name="McDermott P.F."/>
            <person name="Tartera C."/>
            <person name="White D.G."/>
            <person name="Leclerc J.E."/>
            <person name="Ravel J."/>
            <person name="Cebula T.A."/>
        </authorList>
    </citation>
    <scope>NUCLEOTIDE SEQUENCE [LARGE SCALE GENOMIC DNA]</scope>
    <source>
        <strain>SL483</strain>
    </source>
</reference>